<protein>
    <recommendedName>
        <fullName>Endochitinase B</fullName>
        <ecNumber>3.2.1.14</ecNumber>
    </recommendedName>
    <alternativeName>
        <fullName>Chitinase B</fullName>
    </alternativeName>
</protein>
<organism>
    <name type="scientific">Emericella nidulans (strain FGSC A4 / ATCC 38163 / CBS 112.46 / NRRL 194 / M139)</name>
    <name type="common">Aspergillus nidulans</name>
    <dbReference type="NCBI Taxonomy" id="227321"/>
    <lineage>
        <taxon>Eukaryota</taxon>
        <taxon>Fungi</taxon>
        <taxon>Dikarya</taxon>
        <taxon>Ascomycota</taxon>
        <taxon>Pezizomycotina</taxon>
        <taxon>Eurotiomycetes</taxon>
        <taxon>Eurotiomycetidae</taxon>
        <taxon>Eurotiales</taxon>
        <taxon>Aspergillaceae</taxon>
        <taxon>Aspergillus</taxon>
        <taxon>Aspergillus subgen. Nidulantes</taxon>
    </lineage>
</organism>
<feature type="chain" id="PRO_0000429825" description="Endochitinase B">
    <location>
        <begin position="1"/>
        <end position="398"/>
    </location>
</feature>
<feature type="domain" description="GH18" evidence="2">
    <location>
        <begin position="4"/>
        <end position="363"/>
    </location>
</feature>
<feature type="active site" description="Proton donor" evidence="2">
    <location>
        <position position="138"/>
    </location>
</feature>
<feature type="binding site" evidence="2">
    <location>
        <begin position="69"/>
        <end position="70"/>
    </location>
    <ligand>
        <name>chitin</name>
        <dbReference type="ChEBI" id="CHEBI:17029"/>
    </ligand>
</feature>
<feature type="binding site" evidence="2">
    <location>
        <begin position="96"/>
        <end position="99"/>
    </location>
    <ligand>
        <name>chitin</name>
        <dbReference type="ChEBI" id="CHEBI:17029"/>
    </ligand>
</feature>
<feature type="binding site" evidence="2">
    <location>
        <position position="139"/>
    </location>
    <ligand>
        <name>chitin</name>
        <dbReference type="ChEBI" id="CHEBI:17029"/>
    </ligand>
</feature>
<feature type="binding site" evidence="2">
    <location>
        <begin position="200"/>
        <end position="203"/>
    </location>
    <ligand>
        <name>chitin</name>
        <dbReference type="ChEBI" id="CHEBI:17029"/>
    </ligand>
</feature>
<feature type="binding site" evidence="2">
    <location>
        <position position="342"/>
    </location>
    <ligand>
        <name>chitin</name>
        <dbReference type="ChEBI" id="CHEBI:17029"/>
    </ligand>
</feature>
<feature type="glycosylation site" description="N-linked (GlcNAc...) asparagine" evidence="1">
    <location>
        <position position="66"/>
    </location>
</feature>
<feature type="glycosylation site" description="N-linked (GlcNAc...) asparagine" evidence="1">
    <location>
        <position position="103"/>
    </location>
</feature>
<evidence type="ECO:0000255" key="1"/>
<evidence type="ECO:0000255" key="2">
    <source>
        <dbReference type="PROSITE-ProRule" id="PRU01258"/>
    </source>
</evidence>
<evidence type="ECO:0000269" key="3">
    <source>
    </source>
</evidence>
<evidence type="ECO:0000269" key="4">
    <source>
    </source>
</evidence>
<evidence type="ECO:0000269" key="5">
    <source>
    </source>
</evidence>
<evidence type="ECO:0000269" key="6">
    <source>
    </source>
</evidence>
<evidence type="ECO:0000305" key="7"/>
<accession>G5EAZ3</accession>
<accession>C8V9U9</accession>
<name>CHIB1_EMENI</name>
<reference key="1">
    <citation type="journal article" date="2005" name="Nature">
        <title>Sequencing of Aspergillus nidulans and comparative analysis with A. fumigatus and A. oryzae.</title>
        <authorList>
            <person name="Galagan J.E."/>
            <person name="Calvo S.E."/>
            <person name="Cuomo C."/>
            <person name="Ma L.-J."/>
            <person name="Wortman J.R."/>
            <person name="Batzoglou S."/>
            <person name="Lee S.-I."/>
            <person name="Bastuerkmen M."/>
            <person name="Spevak C.C."/>
            <person name="Clutterbuck J."/>
            <person name="Kapitonov V."/>
            <person name="Jurka J."/>
            <person name="Scazzocchio C."/>
            <person name="Farman M.L."/>
            <person name="Butler J."/>
            <person name="Purcell S."/>
            <person name="Harris S."/>
            <person name="Braus G.H."/>
            <person name="Draht O."/>
            <person name="Busch S."/>
            <person name="D'Enfert C."/>
            <person name="Bouchier C."/>
            <person name="Goldman G.H."/>
            <person name="Bell-Pedersen D."/>
            <person name="Griffiths-Jones S."/>
            <person name="Doonan J.H."/>
            <person name="Yu J."/>
            <person name="Vienken K."/>
            <person name="Pain A."/>
            <person name="Freitag M."/>
            <person name="Selker E.U."/>
            <person name="Archer D.B."/>
            <person name="Penalva M.A."/>
            <person name="Oakley B.R."/>
            <person name="Momany M."/>
            <person name="Tanaka T."/>
            <person name="Kumagai T."/>
            <person name="Asai K."/>
            <person name="Machida M."/>
            <person name="Nierman W.C."/>
            <person name="Denning D.W."/>
            <person name="Caddick M.X."/>
            <person name="Hynes M."/>
            <person name="Paoletti M."/>
            <person name="Fischer R."/>
            <person name="Miller B.L."/>
            <person name="Dyer P.S."/>
            <person name="Sachs M.S."/>
            <person name="Osmani S.A."/>
            <person name="Birren B.W."/>
        </authorList>
    </citation>
    <scope>NUCLEOTIDE SEQUENCE [LARGE SCALE GENOMIC DNA]</scope>
    <source>
        <strain>FGSC A4 / ATCC 38163 / CBS 112.46 / NRRL 194 / M139</strain>
    </source>
</reference>
<reference key="2">
    <citation type="journal article" date="2009" name="Fungal Genet. Biol.">
        <title>The 2008 update of the Aspergillus nidulans genome annotation: a community effort.</title>
        <authorList>
            <person name="Wortman J.R."/>
            <person name="Gilsenan J.M."/>
            <person name="Joardar V."/>
            <person name="Deegan J."/>
            <person name="Clutterbuck J."/>
            <person name="Andersen M.R."/>
            <person name="Archer D."/>
            <person name="Bencina M."/>
            <person name="Braus G."/>
            <person name="Coutinho P."/>
            <person name="von Dohren H."/>
            <person name="Doonan J."/>
            <person name="Driessen A.J."/>
            <person name="Durek P."/>
            <person name="Espeso E."/>
            <person name="Fekete E."/>
            <person name="Flipphi M."/>
            <person name="Estrada C.G."/>
            <person name="Geysens S."/>
            <person name="Goldman G."/>
            <person name="de Groot P.W."/>
            <person name="Hansen K."/>
            <person name="Harris S.D."/>
            <person name="Heinekamp T."/>
            <person name="Helmstaedt K."/>
            <person name="Henrissat B."/>
            <person name="Hofmann G."/>
            <person name="Homan T."/>
            <person name="Horio T."/>
            <person name="Horiuchi H."/>
            <person name="James S."/>
            <person name="Jones M."/>
            <person name="Karaffa L."/>
            <person name="Karanyi Z."/>
            <person name="Kato M."/>
            <person name="Keller N."/>
            <person name="Kelly D.E."/>
            <person name="Kiel J.A."/>
            <person name="Kim J.M."/>
            <person name="van der Klei I.J."/>
            <person name="Klis F.M."/>
            <person name="Kovalchuk A."/>
            <person name="Krasevec N."/>
            <person name="Kubicek C.P."/>
            <person name="Liu B."/>
            <person name="Maccabe A."/>
            <person name="Meyer V."/>
            <person name="Mirabito P."/>
            <person name="Miskei M."/>
            <person name="Mos M."/>
            <person name="Mullins J."/>
            <person name="Nelson D.R."/>
            <person name="Nielsen J."/>
            <person name="Oakley B.R."/>
            <person name="Osmani S.A."/>
            <person name="Pakula T."/>
            <person name="Paszewski A."/>
            <person name="Paulsen I."/>
            <person name="Pilsyk S."/>
            <person name="Pocsi I."/>
            <person name="Punt P.J."/>
            <person name="Ram A.F."/>
            <person name="Ren Q."/>
            <person name="Robellet X."/>
            <person name="Robson G."/>
            <person name="Seiboth B."/>
            <person name="van Solingen P."/>
            <person name="Specht T."/>
            <person name="Sun J."/>
            <person name="Taheri-Talesh N."/>
            <person name="Takeshita N."/>
            <person name="Ussery D."/>
            <person name="vanKuyk P.A."/>
            <person name="Visser H."/>
            <person name="van de Vondervoort P.J."/>
            <person name="de Vries R.P."/>
            <person name="Walton J."/>
            <person name="Xiang X."/>
            <person name="Xiong Y."/>
            <person name="Zeng A.P."/>
            <person name="Brandt B.W."/>
            <person name="Cornell M.J."/>
            <person name="van den Hondel C.A."/>
            <person name="Visser J."/>
            <person name="Oliver S.G."/>
            <person name="Turner G."/>
        </authorList>
    </citation>
    <scope>GENOME REANNOTATION</scope>
    <source>
        <strain>FGSC A4 / ATCC 38163 / CBS 112.46 / NRRL 194 / M139</strain>
    </source>
</reference>
<reference key="3">
    <citation type="journal article" date="2008" name="Acta Microbiol. Immunol. Hung.">
        <title>Characterization and heterologous expression of an age-dependent fungal/bacterial type chitinase of Aspergillus nidulans.</title>
        <authorList>
            <person name="Erdei E."/>
            <person name="Pusztahelyi T."/>
            <person name="Miskei M."/>
            <person name="Barna T."/>
            <person name="Pocsi I."/>
        </authorList>
    </citation>
    <scope>CATALYTIC ACTIVITY</scope>
    <scope>BIOPHYSICOCHEMICAL PROPERTIES</scope>
</reference>
<reference key="4">
    <citation type="journal article" date="2009" name="J. Appl. Microbiol.">
        <title>Asexual sporulation signalling regulates autolysis of Aspergillus nidulans via modulating the chitinase ChiB production.</title>
        <authorList>
            <person name="Pocsi I."/>
            <person name="Leiter E."/>
            <person name="Kwon N.J."/>
            <person name="Shin K.S."/>
            <person name="Kwon G.S."/>
            <person name="Pusztahelyi T."/>
            <person name="Emri T."/>
            <person name="Abuknesha R.A."/>
            <person name="Price R.G."/>
            <person name="Yu J.H."/>
        </authorList>
    </citation>
    <scope>DISRUPTION PHENOTYPE</scope>
    <scope>FUNCTION</scope>
    <scope>INDUCTION</scope>
</reference>
<reference key="5">
    <citation type="journal article" date="2012" name="J. Microbiol.">
        <title>Antifungal activity of extracellular hydrolases produced by autolysing Aspergillus nidulans cultures.</title>
        <authorList>
            <person name="Szilagyi M."/>
            <person name="Anton F."/>
            <person name="Forgacs K."/>
            <person name="Yu J.H."/>
            <person name="Pocsi I."/>
            <person name="Emri T."/>
        </authorList>
    </citation>
    <scope>FUNCTION</scope>
</reference>
<reference key="6">
    <citation type="journal article" date="2014" name="BMC Genomics">
        <title>Elucidating how the saprophytic fungus Aspergillus nidulans uses the plant polyester suberin as carbon source.</title>
        <authorList>
            <person name="Martins I."/>
            <person name="Hartmann D.O."/>
            <person name="Alves P.C."/>
            <person name="Martins C."/>
            <person name="Garcia H."/>
            <person name="Leclercq C.C."/>
            <person name="Ferreira R."/>
            <person name="He J."/>
            <person name="Renaut J."/>
            <person name="Becker J.D."/>
            <person name="Silva Pereira C."/>
        </authorList>
    </citation>
    <scope>SUBCELLULAR LOCATION</scope>
</reference>
<comment type="function">
    <text evidence="4 5">Major secreted chitinase involved in the degradation of chitin, a component of the cell walls of fungi and exoskeletal elements of some animals (including worms and arthropods). Plays a role in the morphogenesis and autolysis. Also has significant antifungal activity against various fungal species.</text>
</comment>
<comment type="catalytic activity">
    <reaction evidence="3">
        <text>Random endo-hydrolysis of N-acetyl-beta-D-glucosaminide (1-&gt;4)-beta-linkages in chitin and chitodextrins.</text>
        <dbReference type="EC" id="3.2.1.14"/>
    </reaction>
</comment>
<comment type="biophysicochemical properties">
    <phDependence>
        <text evidence="3">Optimum pH is 5.5-6.5.</text>
    </phDependence>
</comment>
<comment type="subcellular location">
    <subcellularLocation>
        <location evidence="6">Secreted</location>
    </subcellularLocation>
</comment>
<comment type="induction">
    <text evidence="4">Expression is increased at the beginning of the stationary phase of growth and reaches maximum in the early autolytic phase of growth.</text>
</comment>
<comment type="disruption phenotype">
    <text evidence="4">Impairs autolysis.</text>
</comment>
<comment type="similarity">
    <text evidence="7">Belongs to the glycosyl hydrolase 18 family. Chitinase class V subfamily.</text>
</comment>
<gene>
    <name type="primary">chiB</name>
    <name type="ORF">AN4871</name>
</gene>
<keyword id="KW-0119">Carbohydrate metabolism</keyword>
<keyword id="KW-0146">Chitin degradation</keyword>
<keyword id="KW-0325">Glycoprotein</keyword>
<keyword id="KW-0326">Glycosidase</keyword>
<keyword id="KW-0378">Hydrolase</keyword>
<keyword id="KW-0624">Polysaccharide degradation</keyword>
<keyword id="KW-1185">Reference proteome</keyword>
<keyword id="KW-0964">Secreted</keyword>
<proteinExistence type="evidence at protein level"/>
<sequence>MSGYKTVGYFVNWAIYGRNYNPQDLPAEKLTHILYAFANVRPETGEVYLSDTWSDIEKHYPTDSWNDTGNNVYGCVKQLGLLKRQHRQLKVLLSIGGWTYSPNFTNGAGTPENRARFAQTATKLITDLGFDGIDIDWEYPQNDQQAQNYVDLLRRCREALNAAQGQRRFQLTVAVPAGPDNYNKLRLQEMTPYLDFYNLMAYDYAGSWDQTAGHQANLYPSTSNPTSTPFNTVQAVNHYIDAGGVPSNKIILGMPIYGRAFQNTDGPGRPYSGIGQGTWEQGVYDYKALPRPGATEQLDTNIGASWSYDPSSREMVSYDTVAAADLKAAYIQSRRLGGAMWWETSADKGGKTANKADGSLIGTFVEDVGGVNNLDRTQNAISYPDSQYDNLKAGFPSS</sequence>
<dbReference type="EC" id="3.2.1.14"/>
<dbReference type="EMBL" id="BN001303">
    <property type="protein sequence ID" value="CBF76583.1"/>
    <property type="molecule type" value="Genomic_DNA"/>
</dbReference>
<dbReference type="EMBL" id="AACD01000084">
    <property type="protein sequence ID" value="EAA60949.1"/>
    <property type="molecule type" value="Genomic_DNA"/>
</dbReference>
<dbReference type="RefSeq" id="XP_662475.1">
    <property type="nucleotide sequence ID" value="XM_657383.1"/>
</dbReference>
<dbReference type="SMR" id="G5EAZ3"/>
<dbReference type="FunCoup" id="G5EAZ3">
    <property type="interactions" value="571"/>
</dbReference>
<dbReference type="STRING" id="227321.G5EAZ3"/>
<dbReference type="CAZy" id="GH18">
    <property type="family name" value="Glycoside Hydrolase Family 18"/>
</dbReference>
<dbReference type="GlyCosmos" id="G5EAZ3">
    <property type="glycosylation" value="2 sites, No reported glycans"/>
</dbReference>
<dbReference type="EnsemblFungi" id="CBF76583">
    <property type="protein sequence ID" value="CBF76583"/>
    <property type="gene ID" value="ANIA_04871"/>
</dbReference>
<dbReference type="KEGG" id="ani:ANIA_04871"/>
<dbReference type="eggNOG" id="KOG2806">
    <property type="taxonomic scope" value="Eukaryota"/>
</dbReference>
<dbReference type="HOGENOM" id="CLU_002833_1_0_1"/>
<dbReference type="InParanoid" id="G5EAZ3"/>
<dbReference type="OMA" id="SYPESKY"/>
<dbReference type="OrthoDB" id="76388at2759"/>
<dbReference type="Proteomes" id="UP000000560">
    <property type="component" value="Chromosome III"/>
</dbReference>
<dbReference type="GO" id="GO:0005576">
    <property type="term" value="C:extracellular region"/>
    <property type="evidence" value="ECO:0000318"/>
    <property type="project" value="GO_Central"/>
</dbReference>
<dbReference type="GO" id="GO:0008061">
    <property type="term" value="F:chitin binding"/>
    <property type="evidence" value="ECO:0007669"/>
    <property type="project" value="InterPro"/>
</dbReference>
<dbReference type="GO" id="GO:0004568">
    <property type="term" value="F:chitinase activity"/>
    <property type="evidence" value="ECO:0000318"/>
    <property type="project" value="GO_Central"/>
</dbReference>
<dbReference type="GO" id="GO:0008843">
    <property type="term" value="F:endochitinase activity"/>
    <property type="evidence" value="ECO:0007669"/>
    <property type="project" value="UniProtKB-EC"/>
</dbReference>
<dbReference type="GO" id="GO:0006032">
    <property type="term" value="P:chitin catabolic process"/>
    <property type="evidence" value="ECO:0000318"/>
    <property type="project" value="GO_Central"/>
</dbReference>
<dbReference type="GO" id="GO:0000272">
    <property type="term" value="P:polysaccharide catabolic process"/>
    <property type="evidence" value="ECO:0007669"/>
    <property type="project" value="UniProtKB-KW"/>
</dbReference>
<dbReference type="CDD" id="cd06548">
    <property type="entry name" value="GH18_chitinase"/>
    <property type="match status" value="1"/>
</dbReference>
<dbReference type="FunFam" id="3.10.50.10:FF:000005">
    <property type="entry name" value="Endochitinase B1"/>
    <property type="match status" value="1"/>
</dbReference>
<dbReference type="FunFam" id="3.20.20.80:FF:000095">
    <property type="entry name" value="Endochitinase B1"/>
    <property type="match status" value="1"/>
</dbReference>
<dbReference type="Gene3D" id="3.10.50.10">
    <property type="match status" value="1"/>
</dbReference>
<dbReference type="Gene3D" id="3.20.20.80">
    <property type="entry name" value="Glycosidases"/>
    <property type="match status" value="1"/>
</dbReference>
<dbReference type="InterPro" id="IPR011583">
    <property type="entry name" value="Chitinase_II/V-like_cat"/>
</dbReference>
<dbReference type="InterPro" id="IPR029070">
    <property type="entry name" value="Chitinase_insertion_sf"/>
</dbReference>
<dbReference type="InterPro" id="IPR001223">
    <property type="entry name" value="Glyco_hydro18_cat"/>
</dbReference>
<dbReference type="InterPro" id="IPR001579">
    <property type="entry name" value="Glyco_hydro_18_chit_AS"/>
</dbReference>
<dbReference type="InterPro" id="IPR017853">
    <property type="entry name" value="Glycoside_hydrolase_SF"/>
</dbReference>
<dbReference type="InterPro" id="IPR050314">
    <property type="entry name" value="Glycosyl_Hydrlase_18"/>
</dbReference>
<dbReference type="PANTHER" id="PTHR11177">
    <property type="entry name" value="CHITINASE"/>
    <property type="match status" value="1"/>
</dbReference>
<dbReference type="PANTHER" id="PTHR11177:SF365">
    <property type="entry name" value="ENDOCHITINASE B"/>
    <property type="match status" value="1"/>
</dbReference>
<dbReference type="Pfam" id="PF00704">
    <property type="entry name" value="Glyco_hydro_18"/>
    <property type="match status" value="1"/>
</dbReference>
<dbReference type="SMART" id="SM00636">
    <property type="entry name" value="Glyco_18"/>
    <property type="match status" value="1"/>
</dbReference>
<dbReference type="SUPFAM" id="SSF51445">
    <property type="entry name" value="(Trans)glycosidases"/>
    <property type="match status" value="1"/>
</dbReference>
<dbReference type="SUPFAM" id="SSF54556">
    <property type="entry name" value="Chitinase insertion domain"/>
    <property type="match status" value="1"/>
</dbReference>
<dbReference type="PROSITE" id="PS01095">
    <property type="entry name" value="GH18_1"/>
    <property type="match status" value="1"/>
</dbReference>
<dbReference type="PROSITE" id="PS51910">
    <property type="entry name" value="GH18_2"/>
    <property type="match status" value="1"/>
</dbReference>